<evidence type="ECO:0000250" key="1">
    <source>
        <dbReference type="UniProtKB" id="P00711"/>
    </source>
</evidence>
<evidence type="ECO:0000255" key="2">
    <source>
        <dbReference type="PROSITE-ProRule" id="PRU00680"/>
    </source>
</evidence>
<sequence length="123" mass="14222">KQFTKCELSQVLKSMDGYKGVTLPEWICTIFHSSGYDTQTIVKNNGKTEYGLFQINNKMWCRDNQILPSRNICGISCNKFLDDDLTDDVMCAKKILDSEGIDYWLAHKPLCSEKLEQWLCEEL</sequence>
<protein>
    <recommendedName>
        <fullName>Alpha-lactalbumin</fullName>
    </recommendedName>
    <alternativeName>
        <fullName>Lactose synthase B protein</fullName>
    </alternativeName>
</protein>
<accession>P28546</accession>
<keyword id="KW-0106">Calcium</keyword>
<keyword id="KW-0903">Direct protein sequencing</keyword>
<keyword id="KW-1015">Disulfide bond</keyword>
<keyword id="KW-0422">Lactose biosynthesis</keyword>
<keyword id="KW-0479">Metal-binding</keyword>
<keyword id="KW-0494">Milk protein</keyword>
<keyword id="KW-1185">Reference proteome</keyword>
<keyword id="KW-0964">Secreted</keyword>
<proteinExistence type="evidence at protein level"/>
<reference key="1">
    <citation type="journal article" date="1992" name="Biol. Chem. Hoppe-Seyler">
        <title>The amino-acid sequence of two isoforms of alpha-lactalbumin from donkey (Equus asinus) milk is identical.</title>
        <authorList>
            <person name="Giufrida M.G."/>
            <person name="Cantisani A."/>
            <person name="Napolitano L."/>
            <person name="Conti A."/>
            <person name="Godovac-Zimmermann J."/>
        </authorList>
    </citation>
    <scope>PROTEIN SEQUENCE</scope>
</reference>
<dbReference type="PIR" id="S28933">
    <property type="entry name" value="S28933"/>
</dbReference>
<dbReference type="SMR" id="P28546"/>
<dbReference type="Proteomes" id="UP000694387">
    <property type="component" value="Unplaced"/>
</dbReference>
<dbReference type="GO" id="GO:0005576">
    <property type="term" value="C:extracellular region"/>
    <property type="evidence" value="ECO:0007669"/>
    <property type="project" value="UniProtKB-SubCell"/>
</dbReference>
<dbReference type="GO" id="GO:0005509">
    <property type="term" value="F:calcium ion binding"/>
    <property type="evidence" value="ECO:0007669"/>
    <property type="project" value="InterPro"/>
</dbReference>
<dbReference type="GO" id="GO:0004461">
    <property type="term" value="F:lactose synthase activity"/>
    <property type="evidence" value="ECO:0007669"/>
    <property type="project" value="InterPro"/>
</dbReference>
<dbReference type="GO" id="GO:0003796">
    <property type="term" value="F:lysozyme activity"/>
    <property type="evidence" value="ECO:0007669"/>
    <property type="project" value="TreeGrafter"/>
</dbReference>
<dbReference type="GO" id="GO:0050829">
    <property type="term" value="P:defense response to Gram-negative bacterium"/>
    <property type="evidence" value="ECO:0007669"/>
    <property type="project" value="TreeGrafter"/>
</dbReference>
<dbReference type="GO" id="GO:0050830">
    <property type="term" value="P:defense response to Gram-positive bacterium"/>
    <property type="evidence" value="ECO:0007669"/>
    <property type="project" value="TreeGrafter"/>
</dbReference>
<dbReference type="GO" id="GO:0005989">
    <property type="term" value="P:lactose biosynthetic process"/>
    <property type="evidence" value="ECO:0007669"/>
    <property type="project" value="UniProtKB-KW"/>
</dbReference>
<dbReference type="CDD" id="cd16898">
    <property type="entry name" value="LYZ_LA"/>
    <property type="match status" value="1"/>
</dbReference>
<dbReference type="FunFam" id="1.10.530.10:FF:000014">
    <property type="entry name" value="Alpha-lactalbumin"/>
    <property type="match status" value="1"/>
</dbReference>
<dbReference type="Gene3D" id="1.10.530.10">
    <property type="match status" value="1"/>
</dbReference>
<dbReference type="InterPro" id="IPR001916">
    <property type="entry name" value="Glyco_hydro_22"/>
</dbReference>
<dbReference type="InterPro" id="IPR019799">
    <property type="entry name" value="Glyco_hydro_22_CS"/>
</dbReference>
<dbReference type="InterPro" id="IPR000545">
    <property type="entry name" value="Lactalbumin"/>
</dbReference>
<dbReference type="InterPro" id="IPR023346">
    <property type="entry name" value="Lysozyme-like_dom_sf"/>
</dbReference>
<dbReference type="PANTHER" id="PTHR11407:SF32">
    <property type="entry name" value="ALPHA-LACTALBUMIN"/>
    <property type="match status" value="1"/>
</dbReference>
<dbReference type="PANTHER" id="PTHR11407">
    <property type="entry name" value="LYSOZYME C"/>
    <property type="match status" value="1"/>
</dbReference>
<dbReference type="Pfam" id="PF00062">
    <property type="entry name" value="Lys"/>
    <property type="match status" value="1"/>
</dbReference>
<dbReference type="PRINTS" id="PR00136">
    <property type="entry name" value="LACTALBUMIN"/>
</dbReference>
<dbReference type="PRINTS" id="PR00135">
    <property type="entry name" value="LYZLACT"/>
</dbReference>
<dbReference type="SMART" id="SM00263">
    <property type="entry name" value="LYZ1"/>
    <property type="match status" value="1"/>
</dbReference>
<dbReference type="SUPFAM" id="SSF53955">
    <property type="entry name" value="Lysozyme-like"/>
    <property type="match status" value="1"/>
</dbReference>
<dbReference type="PROSITE" id="PS00128">
    <property type="entry name" value="GLYCOSYL_HYDROL_F22_1"/>
    <property type="match status" value="1"/>
</dbReference>
<dbReference type="PROSITE" id="PS51348">
    <property type="entry name" value="GLYCOSYL_HYDROL_F22_2"/>
    <property type="match status" value="1"/>
</dbReference>
<gene>
    <name type="primary">LALBA</name>
</gene>
<organism>
    <name type="scientific">Equus asinus</name>
    <name type="common">Donkey</name>
    <name type="synonym">Equus africanus asinus</name>
    <dbReference type="NCBI Taxonomy" id="9793"/>
    <lineage>
        <taxon>Eukaryota</taxon>
        <taxon>Metazoa</taxon>
        <taxon>Chordata</taxon>
        <taxon>Craniata</taxon>
        <taxon>Vertebrata</taxon>
        <taxon>Euteleostomi</taxon>
        <taxon>Mammalia</taxon>
        <taxon>Eutheria</taxon>
        <taxon>Laurasiatheria</taxon>
        <taxon>Perissodactyla</taxon>
        <taxon>Equidae</taxon>
        <taxon>Equus</taxon>
    </lineage>
</organism>
<feature type="chain" id="PRO_0000208834" description="Alpha-lactalbumin">
    <location>
        <begin position="1"/>
        <end position="123"/>
    </location>
</feature>
<feature type="domain" description="C-type lysozyme" evidence="2">
    <location>
        <begin position="1"/>
        <end position="123"/>
    </location>
</feature>
<feature type="binding site" evidence="1">
    <location>
        <position position="79"/>
    </location>
    <ligand>
        <name>Ca(2+)</name>
        <dbReference type="ChEBI" id="CHEBI:29108"/>
    </ligand>
</feature>
<feature type="binding site" evidence="1">
    <location>
        <position position="82"/>
    </location>
    <ligand>
        <name>Ca(2+)</name>
        <dbReference type="ChEBI" id="CHEBI:29108"/>
    </ligand>
</feature>
<feature type="binding site" evidence="1">
    <location>
        <position position="84"/>
    </location>
    <ligand>
        <name>Ca(2+)</name>
        <dbReference type="ChEBI" id="CHEBI:29108"/>
    </ligand>
</feature>
<feature type="binding site" evidence="1">
    <location>
        <position position="87"/>
    </location>
    <ligand>
        <name>Ca(2+)</name>
        <dbReference type="ChEBI" id="CHEBI:29108"/>
    </ligand>
</feature>
<feature type="binding site" evidence="1">
    <location>
        <position position="88"/>
    </location>
    <ligand>
        <name>Ca(2+)</name>
        <dbReference type="ChEBI" id="CHEBI:29108"/>
    </ligand>
</feature>
<feature type="disulfide bond" evidence="2">
    <location>
        <begin position="6"/>
        <end position="120"/>
    </location>
</feature>
<feature type="disulfide bond" evidence="2">
    <location>
        <begin position="28"/>
        <end position="111"/>
    </location>
</feature>
<feature type="disulfide bond" evidence="2">
    <location>
        <begin position="61"/>
        <end position="77"/>
    </location>
</feature>
<feature type="disulfide bond" evidence="2">
    <location>
        <begin position="73"/>
        <end position="91"/>
    </location>
</feature>
<comment type="function">
    <text>Regulatory subunit of lactose synthase, changes the substrate specificity of galactosyltransferase in the mammary gland making glucose a good acceptor substrate for this enzyme. This enables LS to synthesize lactose, the major carbohydrate component of milk. In other tissues, galactosyltransferase transfers galactose onto the N-acetylglucosamine of the oligosaccharide chains in glycoproteins.</text>
</comment>
<comment type="subunit">
    <text>Lactose synthase (LS) is a heterodimer of a catalytic component, beta1,4-galactosyltransferase (beta4Gal-T1) and a regulatory component, alpha-lactalbumin (LA).</text>
</comment>
<comment type="subcellular location">
    <subcellularLocation>
        <location>Secreted</location>
    </subcellularLocation>
</comment>
<comment type="tissue specificity">
    <text>Mammary gland specific. Secreted in milk.</text>
</comment>
<comment type="similarity">
    <text evidence="2">Belongs to the glycosyl hydrolase 22 family.</text>
</comment>
<name>LALBA_EQUAS</name>